<evidence type="ECO:0000255" key="1">
    <source>
        <dbReference type="HAMAP-Rule" id="MF_00627"/>
    </source>
</evidence>
<name>TDH_VIBVY</name>
<sequence>MKIKALSKLKPEEGIWMTEVDKPVLGHNDLLIKIKKTAICGTDVHIYNWDEWSQKTIPVPMVVGHEYVGEVVGIGQEVRGFEIGDRVSGEGHITCGHCRNCRGGRTHLCRNTIGVGVNRTGCFSEYLVIPAFNAFKIPANISDDLASIFDPFGNAVHTALSFDLVGEDVLITGAGPIGIMAAAVAKHVGARHVVITDVNEYRLDLARKMGVTRAVNVAEQKLDDVMVELGMTEGFDVGLEMSGNPSAFNSMLKTMNHGGRIALLGIPPSDMGIDWNQVIFKGLVIKGIYGREMFETWYKMASLIQSGLDLTPIITHHFKVDDFQQGFDIMRSGMSGKVILDWE</sequence>
<proteinExistence type="inferred from homology"/>
<accession>Q7MFL5</accession>
<protein>
    <recommendedName>
        <fullName evidence="1">L-threonine 3-dehydrogenase</fullName>
        <shortName evidence="1">TDH</shortName>
        <ecNumber evidence="1">1.1.1.103</ecNumber>
    </recommendedName>
</protein>
<feature type="chain" id="PRO_0000160869" description="L-threonine 3-dehydrogenase">
    <location>
        <begin position="1"/>
        <end position="343"/>
    </location>
</feature>
<feature type="active site" description="Charge relay system" evidence="1">
    <location>
        <position position="42"/>
    </location>
</feature>
<feature type="active site" description="Charge relay system" evidence="1">
    <location>
        <position position="45"/>
    </location>
</feature>
<feature type="binding site" evidence="1">
    <location>
        <position position="40"/>
    </location>
    <ligand>
        <name>Zn(2+)</name>
        <dbReference type="ChEBI" id="CHEBI:29105"/>
        <label>1</label>
        <note>catalytic</note>
    </ligand>
</feature>
<feature type="binding site" evidence="1">
    <location>
        <position position="65"/>
    </location>
    <ligand>
        <name>Zn(2+)</name>
        <dbReference type="ChEBI" id="CHEBI:29105"/>
        <label>1</label>
        <note>catalytic</note>
    </ligand>
</feature>
<feature type="binding site" evidence="1">
    <location>
        <position position="66"/>
    </location>
    <ligand>
        <name>Zn(2+)</name>
        <dbReference type="ChEBI" id="CHEBI:29105"/>
        <label>1</label>
        <note>catalytic</note>
    </ligand>
</feature>
<feature type="binding site" evidence="1">
    <location>
        <position position="95"/>
    </location>
    <ligand>
        <name>Zn(2+)</name>
        <dbReference type="ChEBI" id="CHEBI:29105"/>
        <label>2</label>
    </ligand>
</feature>
<feature type="binding site" evidence="1">
    <location>
        <position position="98"/>
    </location>
    <ligand>
        <name>Zn(2+)</name>
        <dbReference type="ChEBI" id="CHEBI:29105"/>
        <label>2</label>
    </ligand>
</feature>
<feature type="binding site" evidence="1">
    <location>
        <position position="101"/>
    </location>
    <ligand>
        <name>Zn(2+)</name>
        <dbReference type="ChEBI" id="CHEBI:29105"/>
        <label>2</label>
    </ligand>
</feature>
<feature type="binding site" evidence="1">
    <location>
        <position position="109"/>
    </location>
    <ligand>
        <name>Zn(2+)</name>
        <dbReference type="ChEBI" id="CHEBI:29105"/>
        <label>2</label>
    </ligand>
</feature>
<feature type="binding site" evidence="1">
    <location>
        <position position="177"/>
    </location>
    <ligand>
        <name>NAD(+)</name>
        <dbReference type="ChEBI" id="CHEBI:57540"/>
    </ligand>
</feature>
<feature type="binding site" evidence="1">
    <location>
        <position position="197"/>
    </location>
    <ligand>
        <name>NAD(+)</name>
        <dbReference type="ChEBI" id="CHEBI:57540"/>
    </ligand>
</feature>
<feature type="binding site" evidence="1">
    <location>
        <position position="202"/>
    </location>
    <ligand>
        <name>NAD(+)</name>
        <dbReference type="ChEBI" id="CHEBI:57540"/>
    </ligand>
</feature>
<feature type="binding site" evidence="1">
    <location>
        <begin position="264"/>
        <end position="266"/>
    </location>
    <ligand>
        <name>NAD(+)</name>
        <dbReference type="ChEBI" id="CHEBI:57540"/>
    </ligand>
</feature>
<feature type="binding site" evidence="1">
    <location>
        <begin position="288"/>
        <end position="289"/>
    </location>
    <ligand>
        <name>NAD(+)</name>
        <dbReference type="ChEBI" id="CHEBI:57540"/>
    </ligand>
</feature>
<feature type="site" description="Important for catalytic activity for the proton relay mechanism but does not participate directly in the coordination of zinc atom" evidence="1">
    <location>
        <position position="150"/>
    </location>
</feature>
<organism>
    <name type="scientific">Vibrio vulnificus (strain YJ016)</name>
    <dbReference type="NCBI Taxonomy" id="196600"/>
    <lineage>
        <taxon>Bacteria</taxon>
        <taxon>Pseudomonadati</taxon>
        <taxon>Pseudomonadota</taxon>
        <taxon>Gammaproteobacteria</taxon>
        <taxon>Vibrionales</taxon>
        <taxon>Vibrionaceae</taxon>
        <taxon>Vibrio</taxon>
    </lineage>
</organism>
<dbReference type="EC" id="1.1.1.103" evidence="1"/>
<dbReference type="EMBL" id="BA000038">
    <property type="protein sequence ID" value="BAC96331.1"/>
    <property type="molecule type" value="Genomic_DNA"/>
</dbReference>
<dbReference type="RefSeq" id="WP_011151707.1">
    <property type="nucleotide sequence ID" value="NC_005140.1"/>
</dbReference>
<dbReference type="SMR" id="Q7MFL5"/>
<dbReference type="STRING" id="672.VV93_v1c32920"/>
<dbReference type="KEGG" id="vvy:VVA0305"/>
<dbReference type="PATRIC" id="fig|196600.6.peg.3511"/>
<dbReference type="eggNOG" id="COG1063">
    <property type="taxonomic scope" value="Bacteria"/>
</dbReference>
<dbReference type="HOGENOM" id="CLU_026673_11_0_6"/>
<dbReference type="UniPathway" id="UPA00046">
    <property type="reaction ID" value="UER00505"/>
</dbReference>
<dbReference type="Proteomes" id="UP000002675">
    <property type="component" value="Chromosome II"/>
</dbReference>
<dbReference type="GO" id="GO:0005737">
    <property type="term" value="C:cytoplasm"/>
    <property type="evidence" value="ECO:0007669"/>
    <property type="project" value="UniProtKB-SubCell"/>
</dbReference>
<dbReference type="GO" id="GO:0008743">
    <property type="term" value="F:L-threonine 3-dehydrogenase activity"/>
    <property type="evidence" value="ECO:0007669"/>
    <property type="project" value="UniProtKB-UniRule"/>
</dbReference>
<dbReference type="GO" id="GO:0008270">
    <property type="term" value="F:zinc ion binding"/>
    <property type="evidence" value="ECO:0007669"/>
    <property type="project" value="UniProtKB-UniRule"/>
</dbReference>
<dbReference type="GO" id="GO:0019518">
    <property type="term" value="P:L-threonine catabolic process to glycine"/>
    <property type="evidence" value="ECO:0007669"/>
    <property type="project" value="UniProtKB-UniPathway"/>
</dbReference>
<dbReference type="FunFam" id="3.40.50.720:FF:000059">
    <property type="entry name" value="L-threonine 3-dehydrogenase"/>
    <property type="match status" value="1"/>
</dbReference>
<dbReference type="Gene3D" id="3.90.180.10">
    <property type="entry name" value="Medium-chain alcohol dehydrogenases, catalytic domain"/>
    <property type="match status" value="1"/>
</dbReference>
<dbReference type="Gene3D" id="3.40.50.720">
    <property type="entry name" value="NAD(P)-binding Rossmann-like Domain"/>
    <property type="match status" value="1"/>
</dbReference>
<dbReference type="HAMAP" id="MF_00627">
    <property type="entry name" value="Thr_dehydrog"/>
    <property type="match status" value="1"/>
</dbReference>
<dbReference type="InterPro" id="IPR013149">
    <property type="entry name" value="ADH-like_C"/>
</dbReference>
<dbReference type="InterPro" id="IPR013154">
    <property type="entry name" value="ADH-like_N"/>
</dbReference>
<dbReference type="InterPro" id="IPR002328">
    <property type="entry name" value="ADH_Zn_CS"/>
</dbReference>
<dbReference type="InterPro" id="IPR011032">
    <property type="entry name" value="GroES-like_sf"/>
</dbReference>
<dbReference type="InterPro" id="IPR004627">
    <property type="entry name" value="L-Threonine_3-DHase"/>
</dbReference>
<dbReference type="InterPro" id="IPR036291">
    <property type="entry name" value="NAD(P)-bd_dom_sf"/>
</dbReference>
<dbReference type="InterPro" id="IPR020843">
    <property type="entry name" value="PKS_ER"/>
</dbReference>
<dbReference type="InterPro" id="IPR050129">
    <property type="entry name" value="Zn_alcohol_dh"/>
</dbReference>
<dbReference type="NCBIfam" id="NF003808">
    <property type="entry name" value="PRK05396.1"/>
    <property type="match status" value="1"/>
</dbReference>
<dbReference type="NCBIfam" id="TIGR00692">
    <property type="entry name" value="tdh"/>
    <property type="match status" value="1"/>
</dbReference>
<dbReference type="PANTHER" id="PTHR43401">
    <property type="entry name" value="L-THREONINE 3-DEHYDROGENASE"/>
    <property type="match status" value="1"/>
</dbReference>
<dbReference type="PANTHER" id="PTHR43401:SF2">
    <property type="entry name" value="L-THREONINE 3-DEHYDROGENASE"/>
    <property type="match status" value="1"/>
</dbReference>
<dbReference type="Pfam" id="PF08240">
    <property type="entry name" value="ADH_N"/>
    <property type="match status" value="1"/>
</dbReference>
<dbReference type="Pfam" id="PF00107">
    <property type="entry name" value="ADH_zinc_N"/>
    <property type="match status" value="1"/>
</dbReference>
<dbReference type="SMART" id="SM00829">
    <property type="entry name" value="PKS_ER"/>
    <property type="match status" value="1"/>
</dbReference>
<dbReference type="SUPFAM" id="SSF50129">
    <property type="entry name" value="GroES-like"/>
    <property type="match status" value="1"/>
</dbReference>
<dbReference type="SUPFAM" id="SSF51735">
    <property type="entry name" value="NAD(P)-binding Rossmann-fold domains"/>
    <property type="match status" value="1"/>
</dbReference>
<dbReference type="PROSITE" id="PS00059">
    <property type="entry name" value="ADH_ZINC"/>
    <property type="match status" value="1"/>
</dbReference>
<keyword id="KW-0963">Cytoplasm</keyword>
<keyword id="KW-0479">Metal-binding</keyword>
<keyword id="KW-0520">NAD</keyword>
<keyword id="KW-0560">Oxidoreductase</keyword>
<keyword id="KW-0862">Zinc</keyword>
<gene>
    <name evidence="1" type="primary">tdh</name>
    <name type="ordered locus">VVA0305</name>
</gene>
<reference key="1">
    <citation type="journal article" date="2003" name="Genome Res.">
        <title>Comparative genome analysis of Vibrio vulnificus, a marine pathogen.</title>
        <authorList>
            <person name="Chen C.-Y."/>
            <person name="Wu K.-M."/>
            <person name="Chang Y.-C."/>
            <person name="Chang C.-H."/>
            <person name="Tsai H.-C."/>
            <person name="Liao T.-L."/>
            <person name="Liu Y.-M."/>
            <person name="Chen H.-J."/>
            <person name="Shen A.B.-T."/>
            <person name="Li J.-C."/>
            <person name="Su T.-L."/>
            <person name="Shao C.-P."/>
            <person name="Lee C.-T."/>
            <person name="Hor L.-I."/>
            <person name="Tsai S.-F."/>
        </authorList>
    </citation>
    <scope>NUCLEOTIDE SEQUENCE [LARGE SCALE GENOMIC DNA]</scope>
    <source>
        <strain>YJ016</strain>
    </source>
</reference>
<comment type="function">
    <text evidence="1">Catalyzes the NAD(+)-dependent oxidation of L-threonine to 2-amino-3-ketobutyrate.</text>
</comment>
<comment type="catalytic activity">
    <reaction evidence="1">
        <text>L-threonine + NAD(+) = (2S)-2-amino-3-oxobutanoate + NADH + H(+)</text>
        <dbReference type="Rhea" id="RHEA:13161"/>
        <dbReference type="ChEBI" id="CHEBI:15378"/>
        <dbReference type="ChEBI" id="CHEBI:57540"/>
        <dbReference type="ChEBI" id="CHEBI:57926"/>
        <dbReference type="ChEBI" id="CHEBI:57945"/>
        <dbReference type="ChEBI" id="CHEBI:78948"/>
        <dbReference type="EC" id="1.1.1.103"/>
    </reaction>
</comment>
<comment type="cofactor">
    <cofactor evidence="1">
        <name>Zn(2+)</name>
        <dbReference type="ChEBI" id="CHEBI:29105"/>
    </cofactor>
    <text evidence="1">Binds 2 Zn(2+) ions per subunit.</text>
</comment>
<comment type="pathway">
    <text evidence="1">Amino-acid degradation; L-threonine degradation via oxydo-reductase pathway; glycine from L-threonine: step 1/2.</text>
</comment>
<comment type="subunit">
    <text evidence="1">Homotetramer.</text>
</comment>
<comment type="subcellular location">
    <subcellularLocation>
        <location evidence="1">Cytoplasm</location>
    </subcellularLocation>
</comment>
<comment type="similarity">
    <text evidence="1">Belongs to the zinc-containing alcohol dehydrogenase family.</text>
</comment>